<accession>Q3Z455</accession>
<protein>
    <recommendedName>
        <fullName evidence="1">2,3-bisphosphoglycerate-dependent phosphoglycerate mutase</fullName>
        <shortName evidence="1">BPG-dependent PGAM</shortName>
        <shortName evidence="1">PGAM</shortName>
        <shortName evidence="1">Phosphoglyceromutase</shortName>
        <shortName evidence="1">dPGM</shortName>
        <ecNumber evidence="1">5.4.2.11</ecNumber>
    </recommendedName>
</protein>
<keyword id="KW-0312">Gluconeogenesis</keyword>
<keyword id="KW-0324">Glycolysis</keyword>
<keyword id="KW-0413">Isomerase</keyword>
<keyword id="KW-1185">Reference proteome</keyword>
<comment type="function">
    <text evidence="1">Catalyzes the interconversion of 2-phosphoglycerate and 3-phosphoglycerate.</text>
</comment>
<comment type="catalytic activity">
    <reaction evidence="1">
        <text>(2R)-2-phosphoglycerate = (2R)-3-phosphoglycerate</text>
        <dbReference type="Rhea" id="RHEA:15901"/>
        <dbReference type="ChEBI" id="CHEBI:58272"/>
        <dbReference type="ChEBI" id="CHEBI:58289"/>
        <dbReference type="EC" id="5.4.2.11"/>
    </reaction>
</comment>
<comment type="pathway">
    <text evidence="1">Carbohydrate degradation; glycolysis; pyruvate from D-glyceraldehyde 3-phosphate: step 3/5.</text>
</comment>
<comment type="subunit">
    <text evidence="1">Homodimer.</text>
</comment>
<comment type="similarity">
    <text evidence="1">Belongs to the phosphoglycerate mutase family. BPG-dependent PGAM subfamily.</text>
</comment>
<organism>
    <name type="scientific">Shigella sonnei (strain Ss046)</name>
    <dbReference type="NCBI Taxonomy" id="300269"/>
    <lineage>
        <taxon>Bacteria</taxon>
        <taxon>Pseudomonadati</taxon>
        <taxon>Pseudomonadota</taxon>
        <taxon>Gammaproteobacteria</taxon>
        <taxon>Enterobacterales</taxon>
        <taxon>Enterobacteriaceae</taxon>
        <taxon>Shigella</taxon>
    </lineage>
</organism>
<name>GPMA_SHISS</name>
<dbReference type="EC" id="5.4.2.11" evidence="1"/>
<dbReference type="EMBL" id="CP000038">
    <property type="protein sequence ID" value="AAZ87457.1"/>
    <property type="molecule type" value="Genomic_DNA"/>
</dbReference>
<dbReference type="RefSeq" id="WP_001295305.1">
    <property type="nucleotide sequence ID" value="NC_007384.1"/>
</dbReference>
<dbReference type="SMR" id="Q3Z455"/>
<dbReference type="GeneID" id="93776726"/>
<dbReference type="KEGG" id="ssn:SSON_0707"/>
<dbReference type="HOGENOM" id="CLU_033323_1_1_6"/>
<dbReference type="UniPathway" id="UPA00109">
    <property type="reaction ID" value="UER00186"/>
</dbReference>
<dbReference type="Proteomes" id="UP000002529">
    <property type="component" value="Chromosome"/>
</dbReference>
<dbReference type="GO" id="GO:0004619">
    <property type="term" value="F:phosphoglycerate mutase activity"/>
    <property type="evidence" value="ECO:0007669"/>
    <property type="project" value="UniProtKB-EC"/>
</dbReference>
<dbReference type="GO" id="GO:0006094">
    <property type="term" value="P:gluconeogenesis"/>
    <property type="evidence" value="ECO:0007669"/>
    <property type="project" value="UniProtKB-UniRule"/>
</dbReference>
<dbReference type="GO" id="GO:0006096">
    <property type="term" value="P:glycolytic process"/>
    <property type="evidence" value="ECO:0007669"/>
    <property type="project" value="UniProtKB-UniRule"/>
</dbReference>
<dbReference type="CDD" id="cd07067">
    <property type="entry name" value="HP_PGM_like"/>
    <property type="match status" value="1"/>
</dbReference>
<dbReference type="FunFam" id="3.40.50.1240:FF:000003">
    <property type="entry name" value="2,3-bisphosphoglycerate-dependent phosphoglycerate mutase"/>
    <property type="match status" value="1"/>
</dbReference>
<dbReference type="Gene3D" id="3.40.50.1240">
    <property type="entry name" value="Phosphoglycerate mutase-like"/>
    <property type="match status" value="1"/>
</dbReference>
<dbReference type="HAMAP" id="MF_01039">
    <property type="entry name" value="PGAM_GpmA"/>
    <property type="match status" value="1"/>
</dbReference>
<dbReference type="InterPro" id="IPR013078">
    <property type="entry name" value="His_Pase_superF_clade-1"/>
</dbReference>
<dbReference type="InterPro" id="IPR029033">
    <property type="entry name" value="His_PPase_superfam"/>
</dbReference>
<dbReference type="InterPro" id="IPR001345">
    <property type="entry name" value="PG/BPGM_mutase_AS"/>
</dbReference>
<dbReference type="InterPro" id="IPR005952">
    <property type="entry name" value="Phosphogly_mut1"/>
</dbReference>
<dbReference type="NCBIfam" id="TIGR01258">
    <property type="entry name" value="pgm_1"/>
    <property type="match status" value="1"/>
</dbReference>
<dbReference type="NCBIfam" id="NF010713">
    <property type="entry name" value="PRK14115.1"/>
    <property type="match status" value="1"/>
</dbReference>
<dbReference type="PANTHER" id="PTHR11931">
    <property type="entry name" value="PHOSPHOGLYCERATE MUTASE"/>
    <property type="match status" value="1"/>
</dbReference>
<dbReference type="Pfam" id="PF00300">
    <property type="entry name" value="His_Phos_1"/>
    <property type="match status" value="1"/>
</dbReference>
<dbReference type="PIRSF" id="PIRSF000709">
    <property type="entry name" value="6PFK_2-Ptase"/>
    <property type="match status" value="1"/>
</dbReference>
<dbReference type="SMART" id="SM00855">
    <property type="entry name" value="PGAM"/>
    <property type="match status" value="1"/>
</dbReference>
<dbReference type="SUPFAM" id="SSF53254">
    <property type="entry name" value="Phosphoglycerate mutase-like"/>
    <property type="match status" value="1"/>
</dbReference>
<dbReference type="PROSITE" id="PS00175">
    <property type="entry name" value="PG_MUTASE"/>
    <property type="match status" value="1"/>
</dbReference>
<reference key="1">
    <citation type="journal article" date="2005" name="Nucleic Acids Res.">
        <title>Genome dynamics and diversity of Shigella species, the etiologic agents of bacillary dysentery.</title>
        <authorList>
            <person name="Yang F."/>
            <person name="Yang J."/>
            <person name="Zhang X."/>
            <person name="Chen L."/>
            <person name="Jiang Y."/>
            <person name="Yan Y."/>
            <person name="Tang X."/>
            <person name="Wang J."/>
            <person name="Xiong Z."/>
            <person name="Dong J."/>
            <person name="Xue Y."/>
            <person name="Zhu Y."/>
            <person name="Xu X."/>
            <person name="Sun L."/>
            <person name="Chen S."/>
            <person name="Nie H."/>
            <person name="Peng J."/>
            <person name="Xu J."/>
            <person name="Wang Y."/>
            <person name="Yuan Z."/>
            <person name="Wen Y."/>
            <person name="Yao Z."/>
            <person name="Shen Y."/>
            <person name="Qiang B."/>
            <person name="Hou Y."/>
            <person name="Yu J."/>
            <person name="Jin Q."/>
        </authorList>
    </citation>
    <scope>NUCLEOTIDE SEQUENCE [LARGE SCALE GENOMIC DNA]</scope>
    <source>
        <strain>Ss046</strain>
    </source>
</reference>
<proteinExistence type="inferred from homology"/>
<feature type="chain" id="PRO_0000229142" description="2,3-bisphosphoglycerate-dependent phosphoglycerate mutase">
    <location>
        <begin position="1"/>
        <end position="250"/>
    </location>
</feature>
<feature type="active site" description="Tele-phosphohistidine intermediate" evidence="1">
    <location>
        <position position="11"/>
    </location>
</feature>
<feature type="active site" description="Proton donor/acceptor" evidence="1">
    <location>
        <position position="89"/>
    </location>
</feature>
<feature type="binding site" evidence="1">
    <location>
        <begin position="10"/>
        <end position="17"/>
    </location>
    <ligand>
        <name>substrate</name>
    </ligand>
</feature>
<feature type="binding site" evidence="1">
    <location>
        <begin position="23"/>
        <end position="24"/>
    </location>
    <ligand>
        <name>substrate</name>
    </ligand>
</feature>
<feature type="binding site" evidence="1">
    <location>
        <position position="62"/>
    </location>
    <ligand>
        <name>substrate</name>
    </ligand>
</feature>
<feature type="binding site" evidence="1">
    <location>
        <begin position="89"/>
        <end position="92"/>
    </location>
    <ligand>
        <name>substrate</name>
    </ligand>
</feature>
<feature type="binding site" evidence="1">
    <location>
        <position position="100"/>
    </location>
    <ligand>
        <name>substrate</name>
    </ligand>
</feature>
<feature type="binding site" evidence="1">
    <location>
        <begin position="116"/>
        <end position="117"/>
    </location>
    <ligand>
        <name>substrate</name>
    </ligand>
</feature>
<feature type="binding site" evidence="1">
    <location>
        <begin position="185"/>
        <end position="186"/>
    </location>
    <ligand>
        <name>substrate</name>
    </ligand>
</feature>
<feature type="site" description="Transition state stabilizer" evidence="1">
    <location>
        <position position="184"/>
    </location>
</feature>
<gene>
    <name evidence="1" type="primary">gpmA</name>
    <name type="ordered locus">SSON_0707</name>
</gene>
<evidence type="ECO:0000255" key="1">
    <source>
        <dbReference type="HAMAP-Rule" id="MF_01039"/>
    </source>
</evidence>
<sequence>MAVTKLVLVRHGESQWNKENRFTGWYDVDLSEKGVSEAKAAGKLLKEEGYSFDFAYTSVLKRAIHTLWNVLDELDQAWLPVEKSWKLNERHYGALQGLNKAETAEKYGDEQVKQWRRGFAVTPPELTKDDERYPGHDPRYAKLSEKELPLTESLALTIDRVIPYWNETILPRMKSGERVIIAAHGNSLRALVKYLDNMSEEEILELNIPTGVPLVYEFDENFKPLKRYYLGNADEIAAKAAAVANQGKAK</sequence>